<name>TIG_RICM5</name>
<organism>
    <name type="scientific">Rickettsia massiliae (strain Mtu5)</name>
    <dbReference type="NCBI Taxonomy" id="416276"/>
    <lineage>
        <taxon>Bacteria</taxon>
        <taxon>Pseudomonadati</taxon>
        <taxon>Pseudomonadota</taxon>
        <taxon>Alphaproteobacteria</taxon>
        <taxon>Rickettsiales</taxon>
        <taxon>Rickettsiaceae</taxon>
        <taxon>Rickettsieae</taxon>
        <taxon>Rickettsia</taxon>
        <taxon>spotted fever group</taxon>
    </lineage>
</organism>
<sequence length="445" mass="50897">MGITVLKNEGLDFHARISTPLSEIDDDIQKELLDLTKKVKIAGFRAGKVPVSIVKKKYGTSVRNDIIERKINHSVNHVIKEHNLNIIGRPKIEELQNESDKALEFTVKIELLPKITIPDFKKISLDRPKLEVNSKDVEEQLEKLAALTKNYTKESKAKIKAGDQVTIDAIGYIKEKAFKDGKLNDFKVIIGSNALIPGFEKQLIGSKTGSEIDVNVTFPENYHAKDLAGKDARFVVQIKAVHTAEPTVIDDEFAKKFQSNSLEELRTHFTKQIENESEEAINTIMKMNLFDKLEKLLDFDVPESLLEQEKNILKSGTDKNEQDESLLKDKSSKEITAYYNKLALRRVRIGLLLAEYAKSKNLQLEPDDLRKVIMQQARNFPGQENMIFDFYKNNPRAIEGLKGPALEDKAVQYIFNHEIKLKEKKYTKEELEKYLEAEEQRITLI</sequence>
<keyword id="KW-0131">Cell cycle</keyword>
<keyword id="KW-0132">Cell division</keyword>
<keyword id="KW-0143">Chaperone</keyword>
<keyword id="KW-0963">Cytoplasm</keyword>
<keyword id="KW-0413">Isomerase</keyword>
<keyword id="KW-0697">Rotamase</keyword>
<dbReference type="EC" id="5.2.1.8" evidence="1"/>
<dbReference type="EMBL" id="CP000683">
    <property type="protein sequence ID" value="ABV85268.1"/>
    <property type="status" value="ALT_INIT"/>
    <property type="molecule type" value="Genomic_DNA"/>
</dbReference>
<dbReference type="RefSeq" id="WP_041404900.1">
    <property type="nucleotide sequence ID" value="NC_009900.1"/>
</dbReference>
<dbReference type="SMR" id="A8F2Y2"/>
<dbReference type="KEGG" id="rms:RMA_1328"/>
<dbReference type="HOGENOM" id="CLU_033058_2_2_5"/>
<dbReference type="Proteomes" id="UP000001311">
    <property type="component" value="Chromosome"/>
</dbReference>
<dbReference type="GO" id="GO:0005737">
    <property type="term" value="C:cytoplasm"/>
    <property type="evidence" value="ECO:0007669"/>
    <property type="project" value="UniProtKB-SubCell"/>
</dbReference>
<dbReference type="GO" id="GO:0003755">
    <property type="term" value="F:peptidyl-prolyl cis-trans isomerase activity"/>
    <property type="evidence" value="ECO:0007669"/>
    <property type="project" value="UniProtKB-UniRule"/>
</dbReference>
<dbReference type="GO" id="GO:0044183">
    <property type="term" value="F:protein folding chaperone"/>
    <property type="evidence" value="ECO:0007669"/>
    <property type="project" value="TreeGrafter"/>
</dbReference>
<dbReference type="GO" id="GO:0043022">
    <property type="term" value="F:ribosome binding"/>
    <property type="evidence" value="ECO:0007669"/>
    <property type="project" value="TreeGrafter"/>
</dbReference>
<dbReference type="GO" id="GO:0051083">
    <property type="term" value="P:'de novo' cotranslational protein folding"/>
    <property type="evidence" value="ECO:0007669"/>
    <property type="project" value="TreeGrafter"/>
</dbReference>
<dbReference type="GO" id="GO:0051301">
    <property type="term" value="P:cell division"/>
    <property type="evidence" value="ECO:0007669"/>
    <property type="project" value="UniProtKB-KW"/>
</dbReference>
<dbReference type="GO" id="GO:0061077">
    <property type="term" value="P:chaperone-mediated protein folding"/>
    <property type="evidence" value="ECO:0007669"/>
    <property type="project" value="TreeGrafter"/>
</dbReference>
<dbReference type="GO" id="GO:0015031">
    <property type="term" value="P:protein transport"/>
    <property type="evidence" value="ECO:0007669"/>
    <property type="project" value="UniProtKB-UniRule"/>
</dbReference>
<dbReference type="GO" id="GO:0043335">
    <property type="term" value="P:protein unfolding"/>
    <property type="evidence" value="ECO:0007669"/>
    <property type="project" value="TreeGrafter"/>
</dbReference>
<dbReference type="FunFam" id="3.10.50.40:FF:000001">
    <property type="entry name" value="Trigger factor"/>
    <property type="match status" value="1"/>
</dbReference>
<dbReference type="Gene3D" id="3.10.50.40">
    <property type="match status" value="1"/>
</dbReference>
<dbReference type="Gene3D" id="3.30.70.1050">
    <property type="entry name" value="Trigger factor ribosome-binding domain"/>
    <property type="match status" value="1"/>
</dbReference>
<dbReference type="Gene3D" id="1.10.3120.10">
    <property type="entry name" value="Trigger factor, C-terminal domain"/>
    <property type="match status" value="1"/>
</dbReference>
<dbReference type="HAMAP" id="MF_00303">
    <property type="entry name" value="Trigger_factor_Tig"/>
    <property type="match status" value="1"/>
</dbReference>
<dbReference type="InterPro" id="IPR046357">
    <property type="entry name" value="PPIase_dom_sf"/>
</dbReference>
<dbReference type="InterPro" id="IPR001179">
    <property type="entry name" value="PPIase_FKBP_dom"/>
</dbReference>
<dbReference type="InterPro" id="IPR005215">
    <property type="entry name" value="Trig_fac"/>
</dbReference>
<dbReference type="InterPro" id="IPR008880">
    <property type="entry name" value="Trigger_fac_C"/>
</dbReference>
<dbReference type="InterPro" id="IPR037041">
    <property type="entry name" value="Trigger_fac_C_sf"/>
</dbReference>
<dbReference type="InterPro" id="IPR008881">
    <property type="entry name" value="Trigger_fac_ribosome-bd_bac"/>
</dbReference>
<dbReference type="InterPro" id="IPR036611">
    <property type="entry name" value="Trigger_fac_ribosome-bd_sf"/>
</dbReference>
<dbReference type="InterPro" id="IPR027304">
    <property type="entry name" value="Trigger_fact/SurA_dom_sf"/>
</dbReference>
<dbReference type="NCBIfam" id="TIGR00115">
    <property type="entry name" value="tig"/>
    <property type="match status" value="1"/>
</dbReference>
<dbReference type="PANTHER" id="PTHR30560">
    <property type="entry name" value="TRIGGER FACTOR CHAPERONE AND PEPTIDYL-PROLYL CIS/TRANS ISOMERASE"/>
    <property type="match status" value="1"/>
</dbReference>
<dbReference type="PANTHER" id="PTHR30560:SF3">
    <property type="entry name" value="TRIGGER FACTOR-LIKE PROTEIN TIG, CHLOROPLASTIC"/>
    <property type="match status" value="1"/>
</dbReference>
<dbReference type="Pfam" id="PF00254">
    <property type="entry name" value="FKBP_C"/>
    <property type="match status" value="1"/>
</dbReference>
<dbReference type="Pfam" id="PF05698">
    <property type="entry name" value="Trigger_C"/>
    <property type="match status" value="1"/>
</dbReference>
<dbReference type="Pfam" id="PF05697">
    <property type="entry name" value="Trigger_N"/>
    <property type="match status" value="1"/>
</dbReference>
<dbReference type="PIRSF" id="PIRSF003095">
    <property type="entry name" value="Trigger_factor"/>
    <property type="match status" value="1"/>
</dbReference>
<dbReference type="SUPFAM" id="SSF54534">
    <property type="entry name" value="FKBP-like"/>
    <property type="match status" value="1"/>
</dbReference>
<dbReference type="SUPFAM" id="SSF109998">
    <property type="entry name" value="Triger factor/SurA peptide-binding domain-like"/>
    <property type="match status" value="1"/>
</dbReference>
<dbReference type="SUPFAM" id="SSF102735">
    <property type="entry name" value="Trigger factor ribosome-binding domain"/>
    <property type="match status" value="1"/>
</dbReference>
<dbReference type="PROSITE" id="PS50059">
    <property type="entry name" value="FKBP_PPIASE"/>
    <property type="match status" value="1"/>
</dbReference>
<protein>
    <recommendedName>
        <fullName evidence="1">Trigger factor</fullName>
        <shortName evidence="1">TF</shortName>
        <ecNumber evidence="1">5.2.1.8</ecNumber>
    </recommendedName>
    <alternativeName>
        <fullName evidence="1">PPIase</fullName>
    </alternativeName>
</protein>
<reference key="1">
    <citation type="journal article" date="2007" name="Genome Res.">
        <title>Lateral gene transfer between obligate intracellular bacteria: evidence from the Rickettsia massiliae genome.</title>
        <authorList>
            <person name="Blanc G."/>
            <person name="Ogata H."/>
            <person name="Robert C."/>
            <person name="Audic S."/>
            <person name="Claverie J.-M."/>
            <person name="Raoult D."/>
        </authorList>
    </citation>
    <scope>NUCLEOTIDE SEQUENCE [LARGE SCALE GENOMIC DNA]</scope>
    <source>
        <strain>Mtu5</strain>
    </source>
</reference>
<evidence type="ECO:0000255" key="1">
    <source>
        <dbReference type="HAMAP-Rule" id="MF_00303"/>
    </source>
</evidence>
<evidence type="ECO:0000305" key="2"/>
<accession>A8F2Y2</accession>
<feature type="chain" id="PRO_0000322450" description="Trigger factor">
    <location>
        <begin position="1"/>
        <end position="445"/>
    </location>
</feature>
<feature type="domain" description="PPIase FKBP-type" evidence="1">
    <location>
        <begin position="162"/>
        <end position="247"/>
    </location>
</feature>
<gene>
    <name evidence="1" type="primary">tig</name>
    <name type="ordered locus">RMA_1328</name>
</gene>
<proteinExistence type="inferred from homology"/>
<comment type="function">
    <text evidence="1">Involved in protein export. Acts as a chaperone by maintaining the newly synthesized protein in an open conformation. Functions as a peptidyl-prolyl cis-trans isomerase.</text>
</comment>
<comment type="catalytic activity">
    <reaction evidence="1">
        <text>[protein]-peptidylproline (omega=180) = [protein]-peptidylproline (omega=0)</text>
        <dbReference type="Rhea" id="RHEA:16237"/>
        <dbReference type="Rhea" id="RHEA-COMP:10747"/>
        <dbReference type="Rhea" id="RHEA-COMP:10748"/>
        <dbReference type="ChEBI" id="CHEBI:83833"/>
        <dbReference type="ChEBI" id="CHEBI:83834"/>
        <dbReference type="EC" id="5.2.1.8"/>
    </reaction>
</comment>
<comment type="subcellular location">
    <subcellularLocation>
        <location>Cytoplasm</location>
    </subcellularLocation>
    <text evidence="1">About half TF is bound to the ribosome near the polypeptide exit tunnel while the other half is free in the cytoplasm.</text>
</comment>
<comment type="domain">
    <text evidence="1">Consists of 3 domains; the N-terminus binds the ribosome, the middle domain has PPIase activity, while the C-terminus has intrinsic chaperone activity on its own.</text>
</comment>
<comment type="similarity">
    <text evidence="1">Belongs to the FKBP-type PPIase family. Tig subfamily.</text>
</comment>
<comment type="sequence caution" evidence="2">
    <conflict type="erroneous initiation">
        <sequence resource="EMBL-CDS" id="ABV85268"/>
    </conflict>
</comment>